<dbReference type="EMBL" id="BC018619">
    <property type="protein sequence ID" value="AAH18619.1"/>
    <property type="molecule type" value="mRNA"/>
</dbReference>
<dbReference type="CCDS" id="CCDS12446.1"/>
<dbReference type="RefSeq" id="NP_071289.1">
    <property type="nucleotide sequence ID" value="NM_022006.2"/>
</dbReference>
<dbReference type="RefSeq" id="XP_054177200.1">
    <property type="nucleotide sequence ID" value="XM_054321225.1"/>
</dbReference>
<dbReference type="SMR" id="P58549"/>
<dbReference type="BioGRID" id="119795">
    <property type="interactions" value="5"/>
</dbReference>
<dbReference type="ComplexPortal" id="CPX-8146">
    <property type="entry name" value="Sodium:potassium-exchanging ATPase complex, FXYD7 variant"/>
</dbReference>
<dbReference type="FunCoup" id="P58549">
    <property type="interactions" value="211"/>
</dbReference>
<dbReference type="IntAct" id="P58549">
    <property type="interactions" value="3"/>
</dbReference>
<dbReference type="STRING" id="9606.ENSP00000270310"/>
<dbReference type="TCDB" id="1.A.27.1.7">
    <property type="family name" value="the phospholemman (plm) family"/>
</dbReference>
<dbReference type="GlyGen" id="P58549">
    <property type="glycosylation" value="3 sites"/>
</dbReference>
<dbReference type="iPTMnet" id="P58549"/>
<dbReference type="PhosphoSitePlus" id="P58549"/>
<dbReference type="BioMuta" id="FXYD7"/>
<dbReference type="DMDM" id="20138168"/>
<dbReference type="jPOST" id="P58549"/>
<dbReference type="MassIVE" id="P58549"/>
<dbReference type="PaxDb" id="9606-ENSP00000270310"/>
<dbReference type="PeptideAtlas" id="P58549"/>
<dbReference type="ProteomicsDB" id="57088"/>
<dbReference type="Antibodypedia" id="21550">
    <property type="antibodies" value="184 antibodies from 27 providers"/>
</dbReference>
<dbReference type="DNASU" id="53822"/>
<dbReference type="Ensembl" id="ENST00000270310.7">
    <property type="protein sequence ID" value="ENSP00000270310.2"/>
    <property type="gene ID" value="ENSG00000221946.8"/>
</dbReference>
<dbReference type="GeneID" id="53822"/>
<dbReference type="KEGG" id="hsa:53822"/>
<dbReference type="MANE-Select" id="ENST00000270310.7">
    <property type="protein sequence ID" value="ENSP00000270310.2"/>
    <property type="RefSeq nucleotide sequence ID" value="NM_022006.2"/>
    <property type="RefSeq protein sequence ID" value="NP_071289.1"/>
</dbReference>
<dbReference type="UCSC" id="uc002nye.2">
    <property type="organism name" value="human"/>
</dbReference>
<dbReference type="AGR" id="HGNC:4034"/>
<dbReference type="CTD" id="53822"/>
<dbReference type="GeneCards" id="FXYD7"/>
<dbReference type="HGNC" id="HGNC:4034">
    <property type="gene designation" value="FXYD7"/>
</dbReference>
<dbReference type="HPA" id="ENSG00000221946">
    <property type="expression patterns" value="Tissue enriched (brain)"/>
</dbReference>
<dbReference type="MIM" id="606684">
    <property type="type" value="gene"/>
</dbReference>
<dbReference type="neXtProt" id="NX_P58549"/>
<dbReference type="OpenTargets" id="ENSG00000221946"/>
<dbReference type="PharmGKB" id="PA28450"/>
<dbReference type="VEuPathDB" id="HostDB:ENSG00000221946"/>
<dbReference type="eggNOG" id="ENOG502SFZR">
    <property type="taxonomic scope" value="Eukaryota"/>
</dbReference>
<dbReference type="GeneTree" id="ENSGT00940000153062"/>
<dbReference type="HOGENOM" id="CLU_168385_1_0_1"/>
<dbReference type="InParanoid" id="P58549"/>
<dbReference type="OMA" id="GLHFPCR"/>
<dbReference type="OrthoDB" id="8961850at2759"/>
<dbReference type="PAN-GO" id="P58549">
    <property type="GO annotations" value="2 GO annotations based on evolutionary models"/>
</dbReference>
<dbReference type="PhylomeDB" id="P58549"/>
<dbReference type="TreeFam" id="TF333443"/>
<dbReference type="PathwayCommons" id="P58549"/>
<dbReference type="Reactome" id="R-HSA-5578775">
    <property type="pathway name" value="Ion homeostasis"/>
</dbReference>
<dbReference type="Reactome" id="R-HSA-936837">
    <property type="pathway name" value="Ion transport by P-type ATPases"/>
</dbReference>
<dbReference type="Reactome" id="R-HSA-9679191">
    <property type="pathway name" value="Potential therapeutics for SARS"/>
</dbReference>
<dbReference type="SignaLink" id="P58549"/>
<dbReference type="BioGRID-ORCS" id="53822">
    <property type="hits" value="14 hits in 1150 CRISPR screens"/>
</dbReference>
<dbReference type="GenomeRNAi" id="53822"/>
<dbReference type="Pharos" id="P58549">
    <property type="development level" value="Tbio"/>
</dbReference>
<dbReference type="PRO" id="PR:P58549"/>
<dbReference type="Proteomes" id="UP000005640">
    <property type="component" value="Chromosome 19"/>
</dbReference>
<dbReference type="RNAct" id="P58549">
    <property type="molecule type" value="protein"/>
</dbReference>
<dbReference type="Bgee" id="ENSG00000221946">
    <property type="expression patterns" value="Expressed in primary visual cortex and 93 other cell types or tissues"/>
</dbReference>
<dbReference type="ExpressionAtlas" id="P58549">
    <property type="expression patterns" value="baseline and differential"/>
</dbReference>
<dbReference type="GO" id="GO:0005886">
    <property type="term" value="C:plasma membrane"/>
    <property type="evidence" value="ECO:0000304"/>
    <property type="project" value="Reactome"/>
</dbReference>
<dbReference type="GO" id="GO:0051117">
    <property type="term" value="F:ATPase binding"/>
    <property type="evidence" value="ECO:0007669"/>
    <property type="project" value="Ensembl"/>
</dbReference>
<dbReference type="GO" id="GO:0017080">
    <property type="term" value="F:sodium channel regulator activity"/>
    <property type="evidence" value="ECO:0000318"/>
    <property type="project" value="GO_Central"/>
</dbReference>
<dbReference type="GO" id="GO:1903278">
    <property type="term" value="P:positive regulation of sodium ion export across plasma membrane"/>
    <property type="evidence" value="ECO:0000318"/>
    <property type="project" value="GO_Central"/>
</dbReference>
<dbReference type="GO" id="GO:0006813">
    <property type="term" value="P:potassium ion transport"/>
    <property type="evidence" value="ECO:0007669"/>
    <property type="project" value="UniProtKB-KW"/>
</dbReference>
<dbReference type="GO" id="GO:0006814">
    <property type="term" value="P:sodium ion transport"/>
    <property type="evidence" value="ECO:0007669"/>
    <property type="project" value="UniProtKB-KW"/>
</dbReference>
<dbReference type="CDD" id="cd20325">
    <property type="entry name" value="FXYD7"/>
    <property type="match status" value="1"/>
</dbReference>
<dbReference type="FunFam" id="1.20.5.780:FF:000003">
    <property type="entry name" value="FXYD domain-containing ion transport regulator"/>
    <property type="match status" value="1"/>
</dbReference>
<dbReference type="Gene3D" id="1.20.5.780">
    <property type="entry name" value="Single helix bin"/>
    <property type="match status" value="1"/>
</dbReference>
<dbReference type="InterPro" id="IPR047284">
    <property type="entry name" value="FXYD7"/>
</dbReference>
<dbReference type="InterPro" id="IPR047297">
    <property type="entry name" value="FXYD_motif"/>
</dbReference>
<dbReference type="InterPro" id="IPR000272">
    <property type="entry name" value="Ion-transport_regulator_FXYD"/>
</dbReference>
<dbReference type="PANTHER" id="PTHR14132:SF1">
    <property type="entry name" value="FXYD DOMAIN-CONTAINING ION TRANSPORT REGULATOR 7"/>
    <property type="match status" value="1"/>
</dbReference>
<dbReference type="PANTHER" id="PTHR14132">
    <property type="entry name" value="SODIUM/POTASSIUM-TRANSPORTING ATPASE SUBUNIT GAMMA"/>
    <property type="match status" value="1"/>
</dbReference>
<dbReference type="Pfam" id="PF02038">
    <property type="entry name" value="ATP1G1_PLM_MAT8"/>
    <property type="match status" value="1"/>
</dbReference>
<dbReference type="PROSITE" id="PS01310">
    <property type="entry name" value="FXYD"/>
    <property type="match status" value="1"/>
</dbReference>
<name>FXYD7_HUMAN</name>
<feature type="chain" id="PRO_0000148190" description="FXYD domain-containing ion transport regulator 7">
    <location>
        <begin position="1"/>
        <end position="80"/>
    </location>
</feature>
<feature type="topological domain" description="Extracellular" evidence="2">
    <location>
        <begin position="1"/>
        <end position="23"/>
    </location>
</feature>
<feature type="transmembrane region" description="Helical" evidence="3">
    <location>
        <begin position="24"/>
        <end position="46"/>
    </location>
</feature>
<feature type="topological domain" description="Cytoplasmic" evidence="6">
    <location>
        <begin position="47"/>
        <end position="80"/>
    </location>
</feature>
<feature type="region of interest" description="Disordered" evidence="4">
    <location>
        <begin position="54"/>
        <end position="80"/>
    </location>
</feature>
<feature type="modified residue" description="Phosphoserine" evidence="2">
    <location>
        <position position="73"/>
    </location>
</feature>
<feature type="glycosylation site" description="O-linked (GlcNAc) threonine" evidence="1">
    <location>
        <position position="3"/>
    </location>
</feature>
<feature type="glycosylation site" description="O-linked (GlcNAc) threonine" evidence="1">
    <location>
        <position position="5"/>
    </location>
</feature>
<feature type="glycosylation site" description="O-linked (GlcNAc) threonine" evidence="1">
    <location>
        <position position="9"/>
    </location>
</feature>
<reference key="1">
    <citation type="journal article" date="2004" name="Genome Res.">
        <title>The status, quality, and expansion of the NIH full-length cDNA project: the Mammalian Gene Collection (MGC).</title>
        <authorList>
            <consortium name="The MGC Project Team"/>
        </authorList>
    </citation>
    <scope>NUCLEOTIDE SEQUENCE [LARGE SCALE MRNA]</scope>
    <source>
        <tissue>Uterus</tissue>
    </source>
</reference>
<reference key="2">
    <citation type="journal article" date="2020" name="J. Gen. Physiol.">
        <title>FXYD protein isoforms differentially modulate human Na/K pump function.</title>
        <authorList>
            <person name="Meyer D.J."/>
            <person name="Bijlani S."/>
            <person name="de Sautu M."/>
            <person name="Spontarelli K."/>
            <person name="Young V.C."/>
            <person name="Gatto C."/>
            <person name="Artigas P."/>
        </authorList>
    </citation>
    <scope>FUNCTION</scope>
    <scope>SUBUNIT</scope>
</reference>
<gene>
    <name type="primary">FXYD7</name>
</gene>
<accession>P58549</accession>
<comment type="function">
    <text evidence="5">Associates with and regulates the activity of the sodium/potassium-transporting ATPase (NKA) which catalyzes the hydrolysis of ATP coupled with the exchange of Na(+) and K(+) ions across the plasma membrane (PubMed:33231612). Reduces the apparent affinity for external K(+), an effect that depends on the presence of external Na(+) and voltage (PubMed:33231612). Increases the apparent affinity for intracellular Na(+) (PubMed:33231612).</text>
</comment>
<comment type="subunit">
    <text evidence="5">Regulatory subunit of the sodium/potassium-transporting ATPase which is composed of a catalytic alpha subunit, a non-catalytic beta subunit and a FXYD regulatory unit that modulates the enzymatic activity in a tissue- and isoform-specific way by changing affinities of the Na+/K+-ATPase toward Na(+), K(+) or ATP.</text>
</comment>
<comment type="interaction">
    <interactant intactId="EBI-10216171">
        <id>P58549</id>
    </interactant>
    <interactant intactId="EBI-743771">
        <id>Q92624</id>
        <label>APPBP2</label>
    </interactant>
    <organismsDiffer>false</organismsDiffer>
    <experiments>6</experiments>
</comment>
<comment type="interaction">
    <interactant intactId="EBI-10216171">
        <id>P58549</id>
    </interactant>
    <interactant intactId="EBI-347996">
        <id>O43765</id>
        <label>SGTA</label>
    </interactant>
    <organismsDiffer>false</organismsDiffer>
    <experiments>8</experiments>
</comment>
<comment type="subcellular location">
    <subcellularLocation>
        <location evidence="1">Cell membrane</location>
        <topology evidence="1">Single-pass type I membrane protein</topology>
    </subcellularLocation>
    <text evidence="2">Able to translocate to the plasma membrane independent of its association with NKA (in vitro).</text>
</comment>
<comment type="domain">
    <text evidence="1">The transmembrane domain is important for the interaction with NKA and with the functional effect of FXYD7.</text>
</comment>
<comment type="PTM">
    <text evidence="1">O-glycosylated; required for stabilization and translocation to the plasma membrane.</text>
</comment>
<comment type="similarity">
    <text evidence="6">Belongs to the FXYD family.</text>
</comment>
<proteinExistence type="evidence at protein level"/>
<protein>
    <recommendedName>
        <fullName>FXYD domain-containing ion transport regulator 7</fullName>
    </recommendedName>
</protein>
<sequence>MATPTQTPTKAPEEPDPFYYDYNTVQTVGMTLATILFLLGILIVISKKVKCRKADSRSESPTCKSCKSELPSSAPGGGGV</sequence>
<organism>
    <name type="scientific">Homo sapiens</name>
    <name type="common">Human</name>
    <dbReference type="NCBI Taxonomy" id="9606"/>
    <lineage>
        <taxon>Eukaryota</taxon>
        <taxon>Metazoa</taxon>
        <taxon>Chordata</taxon>
        <taxon>Craniata</taxon>
        <taxon>Vertebrata</taxon>
        <taxon>Euteleostomi</taxon>
        <taxon>Mammalia</taxon>
        <taxon>Eutheria</taxon>
        <taxon>Euarchontoglires</taxon>
        <taxon>Primates</taxon>
        <taxon>Haplorrhini</taxon>
        <taxon>Catarrhini</taxon>
        <taxon>Hominidae</taxon>
        <taxon>Homo</taxon>
    </lineage>
</organism>
<keyword id="KW-1003">Cell membrane</keyword>
<keyword id="KW-0325">Glycoprotein</keyword>
<keyword id="KW-0406">Ion transport</keyword>
<keyword id="KW-0472">Membrane</keyword>
<keyword id="KW-0597">Phosphoprotein</keyword>
<keyword id="KW-0630">Potassium</keyword>
<keyword id="KW-0633">Potassium transport</keyword>
<keyword id="KW-1267">Proteomics identification</keyword>
<keyword id="KW-1185">Reference proteome</keyword>
<keyword id="KW-0915">Sodium</keyword>
<keyword id="KW-0739">Sodium transport</keyword>
<keyword id="KW-0740">Sodium/potassium transport</keyword>
<keyword id="KW-0812">Transmembrane</keyword>
<keyword id="KW-1133">Transmembrane helix</keyword>
<keyword id="KW-0813">Transport</keyword>
<evidence type="ECO:0000250" key="1">
    <source>
        <dbReference type="UniProtKB" id="P59648"/>
    </source>
</evidence>
<evidence type="ECO:0000250" key="2">
    <source>
        <dbReference type="UniProtKB" id="P59649"/>
    </source>
</evidence>
<evidence type="ECO:0000255" key="3"/>
<evidence type="ECO:0000256" key="4">
    <source>
        <dbReference type="SAM" id="MobiDB-lite"/>
    </source>
</evidence>
<evidence type="ECO:0000269" key="5">
    <source>
    </source>
</evidence>
<evidence type="ECO:0000305" key="6"/>